<feature type="chain" id="PRO_0000196580" description="Flavodoxin YqcA">
    <location>
        <begin position="1"/>
        <end position="151"/>
    </location>
</feature>
<feature type="domain" description="Flavodoxin-like" evidence="2">
    <location>
        <begin position="4"/>
        <end position="145"/>
    </location>
</feature>
<feature type="binding site" evidence="1">
    <location>
        <begin position="10"/>
        <end position="15"/>
    </location>
    <ligand>
        <name>FMN</name>
        <dbReference type="ChEBI" id="CHEBI:58210"/>
    </ligand>
</feature>
<feature type="binding site" evidence="1">
    <location>
        <begin position="99"/>
        <end position="101"/>
    </location>
    <ligand>
        <name>FMN</name>
        <dbReference type="ChEBI" id="CHEBI:58210"/>
    </ligand>
</feature>
<proteinExistence type="inferred from homology"/>
<dbReference type="EMBL" id="X79474">
    <property type="protein sequence ID" value="CAA55983.1"/>
    <property type="molecule type" value="Genomic_DNA"/>
</dbReference>
<dbReference type="PIR" id="S45108">
    <property type="entry name" value="S45108"/>
</dbReference>
<dbReference type="RefSeq" id="WP_039510960.1">
    <property type="nucleotide sequence ID" value="NZ_VBUA01000013.1"/>
</dbReference>
<dbReference type="SMR" id="Q47418"/>
<dbReference type="GeneID" id="93389126"/>
<dbReference type="PATRIC" id="fig|555.21.peg.836"/>
<dbReference type="GO" id="GO:0005829">
    <property type="term" value="C:cytosol"/>
    <property type="evidence" value="ECO:0007669"/>
    <property type="project" value="TreeGrafter"/>
</dbReference>
<dbReference type="GO" id="GO:0050660">
    <property type="term" value="F:flavin adenine dinucleotide binding"/>
    <property type="evidence" value="ECO:0007669"/>
    <property type="project" value="TreeGrafter"/>
</dbReference>
<dbReference type="GO" id="GO:0010181">
    <property type="term" value="F:FMN binding"/>
    <property type="evidence" value="ECO:0007669"/>
    <property type="project" value="InterPro"/>
</dbReference>
<dbReference type="GO" id="GO:0016491">
    <property type="term" value="F:oxidoreductase activity"/>
    <property type="evidence" value="ECO:0007669"/>
    <property type="project" value="TreeGrafter"/>
</dbReference>
<dbReference type="Gene3D" id="3.40.50.360">
    <property type="match status" value="1"/>
</dbReference>
<dbReference type="InterPro" id="IPR001094">
    <property type="entry name" value="Flavdoxin-like"/>
</dbReference>
<dbReference type="InterPro" id="IPR008254">
    <property type="entry name" value="Flavodoxin/NO_synth"/>
</dbReference>
<dbReference type="InterPro" id="IPR029039">
    <property type="entry name" value="Flavoprotein-like_sf"/>
</dbReference>
<dbReference type="NCBIfam" id="NF005989">
    <property type="entry name" value="PRK08105.1"/>
    <property type="match status" value="1"/>
</dbReference>
<dbReference type="PANTHER" id="PTHR19384:SF128">
    <property type="entry name" value="NADPH OXIDOREDUCTASE A"/>
    <property type="match status" value="1"/>
</dbReference>
<dbReference type="PANTHER" id="PTHR19384">
    <property type="entry name" value="NITRIC OXIDE SYNTHASE-RELATED"/>
    <property type="match status" value="1"/>
</dbReference>
<dbReference type="Pfam" id="PF00258">
    <property type="entry name" value="Flavodoxin_1"/>
    <property type="match status" value="1"/>
</dbReference>
<dbReference type="PRINTS" id="PR00369">
    <property type="entry name" value="FLAVODOXIN"/>
</dbReference>
<dbReference type="SUPFAM" id="SSF52218">
    <property type="entry name" value="Flavoproteins"/>
    <property type="match status" value="1"/>
</dbReference>
<dbReference type="PROSITE" id="PS50902">
    <property type="entry name" value="FLAVODOXIN_LIKE"/>
    <property type="match status" value="1"/>
</dbReference>
<accession>Q47418</accession>
<sequence>MAQIGIFVGTVYGNALLVAEEAENILKDRGHEVKVFEDATLESWLDYREQTVLVVTSTTGQGQLPDSIVPLYAALREKGGYQPALRYGVIALGDSSYPNFCAGGHLFDALLQEIGAKRLGDVLDVDAVEHPEPEVISCPWVEAWADLVDAQ</sequence>
<protein>
    <recommendedName>
        <fullName evidence="3">Flavodoxin YqcA</fullName>
    </recommendedName>
    <alternativeName>
        <fullName>Exoenzyme regulation regulon ORF2</fullName>
    </alternativeName>
</protein>
<evidence type="ECO:0000250" key="1">
    <source>
        <dbReference type="UniProtKB" id="P65367"/>
    </source>
</evidence>
<evidence type="ECO:0000255" key="2">
    <source>
        <dbReference type="PROSITE-ProRule" id="PRU00088"/>
    </source>
</evidence>
<evidence type="ECO:0000305" key="3"/>
<reference key="1">
    <citation type="submission" date="1994-05" db="EMBL/GenBank/DDBJ databases">
        <title>Global regulation of Erwinia carotovora exoenzyme virulence factors: multicopy suppression of rex mutants and evidence for a global repression regulon.</title>
        <authorList>
            <person name="Golby P."/>
            <person name="Jones S.E."/>
            <person name="Stephens S."/>
            <person name="Reeves P.J."/>
            <person name="Bycroft B."/>
            <person name="Stewart G."/>
            <person name="Williams P."/>
            <person name="Salmond G.P.C."/>
        </authorList>
    </citation>
    <scope>NUCLEOTIDE SEQUENCE [GENOMIC DNA]</scope>
    <source>
        <strain>SCRI 193</strain>
    </source>
</reference>
<name>YQCA_PECCC</name>
<keyword id="KW-0249">Electron transport</keyword>
<keyword id="KW-0285">Flavoprotein</keyword>
<keyword id="KW-0288">FMN</keyword>
<keyword id="KW-0547">Nucleotide-binding</keyword>
<keyword id="KW-0813">Transport</keyword>
<comment type="function">
    <text>Probable electron transporter.</text>
</comment>
<comment type="cofactor">
    <cofactor evidence="1">
        <name>FMN</name>
        <dbReference type="ChEBI" id="CHEBI:58210"/>
    </cofactor>
    <text evidence="1">Binds 1 FMN non-covalently.</text>
</comment>
<comment type="subunit">
    <text evidence="1">Monomer.</text>
</comment>
<comment type="similarity">
    <text evidence="3">Belongs to the flavodoxin family. MioC subfamily.</text>
</comment>
<organism>
    <name type="scientific">Pectobacterium carotovorum subsp. carotovorum</name>
    <name type="common">Erwinia carotovora subsp. carotovora</name>
    <dbReference type="NCBI Taxonomy" id="555"/>
    <lineage>
        <taxon>Bacteria</taxon>
        <taxon>Pseudomonadati</taxon>
        <taxon>Pseudomonadota</taxon>
        <taxon>Gammaproteobacteria</taxon>
        <taxon>Enterobacterales</taxon>
        <taxon>Pectobacteriaceae</taxon>
        <taxon>Pectobacterium</taxon>
    </lineage>
</organism>